<sequence length="88" mass="10245">MRVKLEHSERGMVTYSQVKKIRENDMYMKIYQEGGYHRINLVNIRKRFIVSGDKEKVSLCLGGCKPIFKGEYDSCPECGAEVRIKEVK</sequence>
<gene>
    <name type="ORF">ORF2</name>
</gene>
<dbReference type="EMBL" id="AF191796">
    <property type="protein sequence ID" value="AAQ13717.1"/>
    <property type="molecule type" value="Genomic_DNA"/>
</dbReference>
<dbReference type="RefSeq" id="YP_529514.1">
    <property type="nucleotide sequence ID" value="NC_007914.1"/>
</dbReference>
<dbReference type="SMR" id="Q25BJ3"/>
<dbReference type="KEGG" id="vg:5142417"/>
<dbReference type="Proteomes" id="UP000007024">
    <property type="component" value="Segment"/>
</dbReference>
<name>Y002_HIS1I</name>
<accession>Q25BJ3</accession>
<organismHost>
    <name type="scientific">Haloarcula hispanica</name>
    <dbReference type="NCBI Taxonomy" id="51589"/>
</organismHost>
<keyword id="KW-1185">Reference proteome</keyword>
<feature type="chain" id="PRO_0000384873" description="Uncharacterized protein ORF2">
    <location>
        <begin position="1"/>
        <end position="88"/>
    </location>
</feature>
<proteinExistence type="predicted"/>
<organism>
    <name type="scientific">His1 virus (isolate Australia/Victoria)</name>
    <name type="common">His1V</name>
    <name type="synonym">Haloarcula hispanica virus 1</name>
    <dbReference type="NCBI Taxonomy" id="654912"/>
    <lineage>
        <taxon>Viruses</taxon>
        <taxon>Viruses incertae sedis</taxon>
        <taxon>Halspiviridae</taxon>
        <taxon>Salterprovirus</taxon>
        <taxon>Salterprovirus His1</taxon>
    </lineage>
</organism>
<reference key="1">
    <citation type="journal article" date="2006" name="Virology">
        <title>His1 and His2 are distantly related, spindle-shaped haloviruses belonging to the novel virus group, Salterprovirus.</title>
        <authorList>
            <person name="Bath C."/>
            <person name="Cukalac T."/>
            <person name="Porter K."/>
            <person name="Dyall-Smith M.L."/>
        </authorList>
    </citation>
    <scope>NUCLEOTIDE SEQUENCE [GENOMIC DNA]</scope>
</reference>
<protein>
    <recommendedName>
        <fullName>Uncharacterized protein ORF2</fullName>
    </recommendedName>
</protein>